<protein>
    <recommendedName>
        <fullName evidence="1">FMN-dependent NADH:quinone oxidoreductase</fullName>
        <ecNumber evidence="1">1.6.5.-</ecNumber>
    </recommendedName>
    <alternativeName>
        <fullName evidence="1">Azo-dye reductase</fullName>
    </alternativeName>
    <alternativeName>
        <fullName evidence="1">FMN-dependent NADH-azo compound oxidoreductase</fullName>
    </alternativeName>
    <alternativeName>
        <fullName evidence="1">FMN-dependent NADH-azoreductase</fullName>
        <ecNumber evidence="1">1.7.1.17</ecNumber>
    </alternativeName>
</protein>
<accession>C0ZIX8</accession>
<proteinExistence type="inferred from homology"/>
<keyword id="KW-0285">Flavoprotein</keyword>
<keyword id="KW-0288">FMN</keyword>
<keyword id="KW-0520">NAD</keyword>
<keyword id="KW-0560">Oxidoreductase</keyword>
<keyword id="KW-1185">Reference proteome</keyword>
<organism>
    <name type="scientific">Brevibacillus brevis (strain 47 / JCM 6285 / NBRC 100599)</name>
    <dbReference type="NCBI Taxonomy" id="358681"/>
    <lineage>
        <taxon>Bacteria</taxon>
        <taxon>Bacillati</taxon>
        <taxon>Bacillota</taxon>
        <taxon>Bacilli</taxon>
        <taxon>Bacillales</taxon>
        <taxon>Paenibacillaceae</taxon>
        <taxon>Brevibacillus</taxon>
    </lineage>
</organism>
<dbReference type="EC" id="1.6.5.-" evidence="1"/>
<dbReference type="EC" id="1.7.1.17" evidence="1"/>
<dbReference type="EMBL" id="AP008955">
    <property type="protein sequence ID" value="BAH41346.1"/>
    <property type="molecule type" value="Genomic_DNA"/>
</dbReference>
<dbReference type="RefSeq" id="WP_012684119.1">
    <property type="nucleotide sequence ID" value="NC_012491.1"/>
</dbReference>
<dbReference type="SMR" id="C0ZIX8"/>
<dbReference type="STRING" id="358681.BBR47_03690"/>
<dbReference type="KEGG" id="bbe:BBR47_03690"/>
<dbReference type="eggNOG" id="COG1182">
    <property type="taxonomic scope" value="Bacteria"/>
</dbReference>
<dbReference type="HOGENOM" id="CLU_088964_3_1_9"/>
<dbReference type="Proteomes" id="UP000001877">
    <property type="component" value="Chromosome"/>
</dbReference>
<dbReference type="GO" id="GO:0009055">
    <property type="term" value="F:electron transfer activity"/>
    <property type="evidence" value="ECO:0007669"/>
    <property type="project" value="UniProtKB-UniRule"/>
</dbReference>
<dbReference type="GO" id="GO:0010181">
    <property type="term" value="F:FMN binding"/>
    <property type="evidence" value="ECO:0007669"/>
    <property type="project" value="UniProtKB-UniRule"/>
</dbReference>
<dbReference type="GO" id="GO:0016652">
    <property type="term" value="F:oxidoreductase activity, acting on NAD(P)H as acceptor"/>
    <property type="evidence" value="ECO:0007669"/>
    <property type="project" value="UniProtKB-UniRule"/>
</dbReference>
<dbReference type="GO" id="GO:0016655">
    <property type="term" value="F:oxidoreductase activity, acting on NAD(P)H, quinone or similar compound as acceptor"/>
    <property type="evidence" value="ECO:0007669"/>
    <property type="project" value="InterPro"/>
</dbReference>
<dbReference type="Gene3D" id="3.40.50.360">
    <property type="match status" value="1"/>
</dbReference>
<dbReference type="HAMAP" id="MF_01216">
    <property type="entry name" value="Azoreductase_type1"/>
    <property type="match status" value="1"/>
</dbReference>
<dbReference type="InterPro" id="IPR003680">
    <property type="entry name" value="Flavodoxin_fold"/>
</dbReference>
<dbReference type="InterPro" id="IPR029039">
    <property type="entry name" value="Flavoprotein-like_sf"/>
</dbReference>
<dbReference type="InterPro" id="IPR050104">
    <property type="entry name" value="FMN-dep_NADH:Q_OxRdtase_AzoR1"/>
</dbReference>
<dbReference type="InterPro" id="IPR023048">
    <property type="entry name" value="NADH:quinone_OxRdtase_FMN_depd"/>
</dbReference>
<dbReference type="NCBIfam" id="NF010075">
    <property type="entry name" value="PRK13556.1"/>
    <property type="match status" value="1"/>
</dbReference>
<dbReference type="PANTHER" id="PTHR43741">
    <property type="entry name" value="FMN-DEPENDENT NADH-AZOREDUCTASE 1"/>
    <property type="match status" value="1"/>
</dbReference>
<dbReference type="PANTHER" id="PTHR43741:SF4">
    <property type="entry name" value="FMN-DEPENDENT NADH:QUINONE OXIDOREDUCTASE"/>
    <property type="match status" value="1"/>
</dbReference>
<dbReference type="Pfam" id="PF02525">
    <property type="entry name" value="Flavodoxin_2"/>
    <property type="match status" value="1"/>
</dbReference>
<dbReference type="SUPFAM" id="SSF52218">
    <property type="entry name" value="Flavoproteins"/>
    <property type="match status" value="1"/>
</dbReference>
<sequence>MSKVLFIKANDRPVEQATSVKLYEAFTKAYKETHPNDEIVELDLFAENLPYYGNDMLTAMWKAGNGIELSADEQKRADLVNKYLNQFTAADKVVFAFPMWNFTVPAVLHSYMDYLSQAGKTFKYTAEGPVGLMGDKKVALLSARGGVYSEGPMAQMEMANKYVRTILGFWGVNNVTEVIVEGHNQFQDKAAELVAAGVEKAVKLAESF</sequence>
<reference key="1">
    <citation type="submission" date="2005-03" db="EMBL/GenBank/DDBJ databases">
        <title>Brevibacillus brevis strain 47, complete genome.</title>
        <authorList>
            <person name="Hosoyama A."/>
            <person name="Yamada R."/>
            <person name="Hongo Y."/>
            <person name="Terui Y."/>
            <person name="Ankai A."/>
            <person name="Masuyama W."/>
            <person name="Sekiguchi M."/>
            <person name="Takeda T."/>
            <person name="Asano K."/>
            <person name="Ohji S."/>
            <person name="Ichikawa N."/>
            <person name="Narita S."/>
            <person name="Aoki N."/>
            <person name="Miura H."/>
            <person name="Matsushita S."/>
            <person name="Sekigawa T."/>
            <person name="Yamagata H."/>
            <person name="Yoshikawa H."/>
            <person name="Udaka S."/>
            <person name="Tanikawa S."/>
            <person name="Fujita N."/>
        </authorList>
    </citation>
    <scope>NUCLEOTIDE SEQUENCE [LARGE SCALE GENOMIC DNA]</scope>
    <source>
        <strain>47 / JCM 6285 / NBRC 100599</strain>
    </source>
</reference>
<evidence type="ECO:0000255" key="1">
    <source>
        <dbReference type="HAMAP-Rule" id="MF_01216"/>
    </source>
</evidence>
<gene>
    <name evidence="1" type="primary">azoR</name>
    <name type="ordered locus">BBR47_03690</name>
</gene>
<name>AZOR_BREBN</name>
<comment type="function">
    <text evidence="1">Quinone reductase that provides resistance to thiol-specific stress caused by electrophilic quinones.</text>
</comment>
<comment type="function">
    <text evidence="1">Also exhibits azoreductase activity. Catalyzes the reductive cleavage of the azo bond in aromatic azo compounds to the corresponding amines.</text>
</comment>
<comment type="catalytic activity">
    <reaction evidence="1">
        <text>2 a quinone + NADH + H(+) = 2 a 1,4-benzosemiquinone + NAD(+)</text>
        <dbReference type="Rhea" id="RHEA:65952"/>
        <dbReference type="ChEBI" id="CHEBI:15378"/>
        <dbReference type="ChEBI" id="CHEBI:57540"/>
        <dbReference type="ChEBI" id="CHEBI:57945"/>
        <dbReference type="ChEBI" id="CHEBI:132124"/>
        <dbReference type="ChEBI" id="CHEBI:134225"/>
    </reaction>
</comment>
<comment type="catalytic activity">
    <reaction evidence="1">
        <text>N,N-dimethyl-1,4-phenylenediamine + anthranilate + 2 NAD(+) = 2-(4-dimethylaminophenyl)diazenylbenzoate + 2 NADH + 2 H(+)</text>
        <dbReference type="Rhea" id="RHEA:55872"/>
        <dbReference type="ChEBI" id="CHEBI:15378"/>
        <dbReference type="ChEBI" id="CHEBI:15783"/>
        <dbReference type="ChEBI" id="CHEBI:16567"/>
        <dbReference type="ChEBI" id="CHEBI:57540"/>
        <dbReference type="ChEBI" id="CHEBI:57945"/>
        <dbReference type="ChEBI" id="CHEBI:71579"/>
        <dbReference type="EC" id="1.7.1.17"/>
    </reaction>
</comment>
<comment type="cofactor">
    <cofactor evidence="1">
        <name>FMN</name>
        <dbReference type="ChEBI" id="CHEBI:58210"/>
    </cofactor>
    <text evidence="1">Binds 1 FMN per subunit.</text>
</comment>
<comment type="subunit">
    <text evidence="1">Homodimer.</text>
</comment>
<comment type="similarity">
    <text evidence="1">Belongs to the azoreductase type 1 family.</text>
</comment>
<feature type="chain" id="PRO_1000164754" description="FMN-dependent NADH:quinone oxidoreductase">
    <location>
        <begin position="1"/>
        <end position="208"/>
    </location>
</feature>
<feature type="binding site" evidence="1">
    <location>
        <begin position="99"/>
        <end position="102"/>
    </location>
    <ligand>
        <name>FMN</name>
        <dbReference type="ChEBI" id="CHEBI:58210"/>
    </ligand>
</feature>